<feature type="chain" id="PRO_0000432490" description="Lipid A 1-phosphatase">
    <location>
        <begin position="1"/>
        <end position="190"/>
    </location>
</feature>
<feature type="transmembrane region" description="Helical; Name=1" evidence="2">
    <location>
        <begin position="22"/>
        <end position="42"/>
    </location>
</feature>
<feature type="transmembrane region" description="Helical; Name=2" evidence="2">
    <location>
        <begin position="60"/>
        <end position="80"/>
    </location>
</feature>
<feature type="transmembrane region" description="Helical; Name=3" evidence="2">
    <location>
        <begin position="117"/>
        <end position="137"/>
    </location>
</feature>
<feature type="transmembrane region" description="Helical; Name=4" evidence="2">
    <location>
        <begin position="145"/>
        <end position="162"/>
    </location>
</feature>
<feature type="transmembrane region" description="Helical; Name=5" evidence="2">
    <location>
        <begin position="164"/>
        <end position="184"/>
    </location>
</feature>
<organism>
    <name type="scientific">Helicobacter pylori (strain ATCC 700392 / 26695)</name>
    <name type="common">Campylobacter pylori</name>
    <dbReference type="NCBI Taxonomy" id="85962"/>
    <lineage>
        <taxon>Bacteria</taxon>
        <taxon>Pseudomonadati</taxon>
        <taxon>Campylobacterota</taxon>
        <taxon>Epsilonproteobacteria</taxon>
        <taxon>Campylobacterales</taxon>
        <taxon>Helicobacteraceae</taxon>
        <taxon>Helicobacter</taxon>
    </lineage>
</organism>
<evidence type="ECO:0000250" key="1">
    <source>
        <dbReference type="UniProtKB" id="Q9ZN40"/>
    </source>
</evidence>
<evidence type="ECO:0000255" key="2"/>
<evidence type="ECO:0000269" key="3">
    <source>
    </source>
</evidence>
<evidence type="ECO:0000269" key="4">
    <source>
    </source>
</evidence>
<evidence type="ECO:0000303" key="5">
    <source>
    </source>
</evidence>
<evidence type="ECO:0000305" key="6"/>
<evidence type="ECO:0000305" key="7">
    <source>
    </source>
</evidence>
<evidence type="ECO:0000305" key="8">
    <source>
    </source>
</evidence>
<accession>O24866</accession>
<accession>Q1PDD4</accession>
<comment type="function">
    <text evidence="1 3 4">Removes the 1-phosphate group from tetra- and probably hexaacylated lipid A species, has no requirement for the Kdo moiety of lipid A (PubMed:15489235). Has no 4'-phosphatase activity (PubMed:15489235, PubMed:16740959). Has no activity on phospholipids (phosphatidylglycerol, phosphatidylethanolamine or cardiolipin). This enzyme has to act before EptA can attach phosphoethanolamine to the 1-position of lipid A (PubMed:16740959). Absence of the 1-phosphate group renders the bacteria partially resistant to host-derived cationic antimicrobial peptides (CAMP), allowing it to camouflage itself from the host innate immune response, and plays a role in the long-term colonization of the host's stomach (By similarity).</text>
</comment>
<comment type="cofactor">
    <text evidence="3">Does not require divalent cations.</text>
</comment>
<comment type="biophysicochemical properties">
    <phDependence>
        <text evidence="3">Optimum pH is 6.0, activity is seen from pH 5.5 to 8.0.</text>
    </phDependence>
</comment>
<comment type="pathway">
    <text evidence="8">Bacterial outer membrane biogenesis; LPS lipid A biosynthesis.</text>
</comment>
<comment type="subcellular location">
    <subcellularLocation>
        <location evidence="7 8">Cell inner membrane</location>
        <topology evidence="2">Multi-pass membrane protein</topology>
    </subcellularLocation>
    <text evidence="3">Activity depends on msbA function when expressed in E.coli, strongly suggesting this protein acts in the periplasm (MsbA flips the lipopolysaccharide precursor across the inner cell membrane).</text>
</comment>
<comment type="disruption phenotype">
    <text evidence="4">Lipid A retains the 1-phosphate group; none of the lipid A species have the usual phosphoethanolamine residue at the 1-position as the enzyme responsible (EptA) cannot act on a phosphorylated residue. In strain 26695 95% is hexaacylated (16 to 18 carbons in length) with both 1- and 4'-phosphate groups, 5% is tetraacylated with only 1-phosphate. In 4 other strains (Cp20-84, Hp7-91, Hsp110-93 and J99) only the 1-phosphate tetraacylated species is seen. Over 1250-fold decrease (strain 26695) or 10-fold decrease (strain Hp7-91) in resistance to cationic antimicrobial peptide (CAMP) polymyxin B (PMB); strain 26695 is probably more sensitive because it has a more negatively charged cell surface and thus binds more CAMP. In strain Hp7-91 upon exposure to PMB the cells round into a coccoid form, the outer membrane forms ruffles, invaginates and in some cases the periplasmic region increases in volume.</text>
</comment>
<comment type="miscellaneous">
    <text evidence="3 4">In this organism most lipid A is tetraacylated without a phosphate group at the 4'-position and a phosphoethanolamine residue at the 1-position.</text>
</comment>
<comment type="similarity">
    <text evidence="6">Belongs to the lipid A LpxE 1-phosphatase family.</text>
</comment>
<sequence>MKKFLFKQKFCESLPKSFSKTLLALSLGLILLGIFAPFPKVPKQPSVPLMFHFTEHYARFIPTILSVAIPLIQRDAVGLFQVANASIATTLLTHTTKRALNHVTINDQRLGERPYGGNFNMPSGHSSMVGLAVAFLMRRYSFKKYFWLLPLVPLTMLARIYLDMHTIGAVLTGLGVGMLCVSLFTSPKKP</sequence>
<dbReference type="EC" id="3.1.-.-" evidence="6"/>
<dbReference type="EMBL" id="DQ447324">
    <property type="protein sequence ID" value="ABE02821.1"/>
    <property type="molecule type" value="Genomic_DNA"/>
</dbReference>
<dbReference type="EMBL" id="AE000511">
    <property type="protein sequence ID" value="AAD07094.1"/>
    <property type="molecule type" value="Genomic_DNA"/>
</dbReference>
<dbReference type="EMBL" id="CP003904">
    <property type="protein sequence ID" value="AFV41241.1"/>
    <property type="molecule type" value="Genomic_DNA"/>
</dbReference>
<dbReference type="PIR" id="E64522">
    <property type="entry name" value="E64522"/>
</dbReference>
<dbReference type="RefSeq" id="NP_206823.1">
    <property type="nucleotide sequence ID" value="NC_000915.1"/>
</dbReference>
<dbReference type="IntAct" id="O24866">
    <property type="interactions" value="2"/>
</dbReference>
<dbReference type="STRING" id="85962.HP_0021"/>
<dbReference type="PaxDb" id="85962-C694_00100"/>
<dbReference type="EnsemblBacteria" id="AAD07094">
    <property type="protein sequence ID" value="AAD07094"/>
    <property type="gene ID" value="HP_0021"/>
</dbReference>
<dbReference type="KEGG" id="heo:C694_00100"/>
<dbReference type="KEGG" id="hpy:HP_0021"/>
<dbReference type="PATRIC" id="fig|85962.47.peg.20"/>
<dbReference type="eggNOG" id="COG0671">
    <property type="taxonomic scope" value="Bacteria"/>
</dbReference>
<dbReference type="HOGENOM" id="CLU_1426205_0_0_7"/>
<dbReference type="InParanoid" id="O24866"/>
<dbReference type="OrthoDB" id="5325447at2"/>
<dbReference type="PhylomeDB" id="O24866"/>
<dbReference type="BioCyc" id="MetaCyc:HP_RS00125-MONOMER"/>
<dbReference type="UniPathway" id="UPA00973"/>
<dbReference type="Proteomes" id="UP000000429">
    <property type="component" value="Chromosome"/>
</dbReference>
<dbReference type="GO" id="GO:0005886">
    <property type="term" value="C:plasma membrane"/>
    <property type="evidence" value="ECO:0007669"/>
    <property type="project" value="UniProtKB-SubCell"/>
</dbReference>
<dbReference type="GO" id="GO:0016791">
    <property type="term" value="F:phosphatase activity"/>
    <property type="evidence" value="ECO:0000314"/>
    <property type="project" value="UniProtKB"/>
</dbReference>
<dbReference type="GO" id="GO:0009245">
    <property type="term" value="P:lipid A biosynthetic process"/>
    <property type="evidence" value="ECO:0000314"/>
    <property type="project" value="UniProtKB"/>
</dbReference>
<dbReference type="GO" id="GO:0009103">
    <property type="term" value="P:lipopolysaccharide biosynthetic process"/>
    <property type="evidence" value="ECO:0007669"/>
    <property type="project" value="UniProtKB-KW"/>
</dbReference>
<dbReference type="GO" id="GO:0046677">
    <property type="term" value="P:response to antibiotic"/>
    <property type="evidence" value="ECO:0007669"/>
    <property type="project" value="UniProtKB-KW"/>
</dbReference>
<dbReference type="FunFam" id="1.20.144.10:FF:000044">
    <property type="entry name" value="Lipid A 1-phosphatase"/>
    <property type="match status" value="1"/>
</dbReference>
<dbReference type="Gene3D" id="1.20.144.10">
    <property type="entry name" value="Phosphatidic acid phosphatase type 2/haloperoxidase"/>
    <property type="match status" value="1"/>
</dbReference>
<dbReference type="InterPro" id="IPR036938">
    <property type="entry name" value="P_Acid_Pase_2/haloperoxi_sf"/>
</dbReference>
<dbReference type="InterPro" id="IPR000326">
    <property type="entry name" value="P_Acid_Pase_2/haloperoxidase"/>
</dbReference>
<dbReference type="NCBIfam" id="NF007159">
    <property type="entry name" value="PRK09597.1"/>
    <property type="match status" value="1"/>
</dbReference>
<dbReference type="Pfam" id="PF01569">
    <property type="entry name" value="PAP2"/>
    <property type="match status" value="1"/>
</dbReference>
<dbReference type="SUPFAM" id="SSF48317">
    <property type="entry name" value="Acid phosphatase/Vanadium-dependent haloperoxidase"/>
    <property type="match status" value="1"/>
</dbReference>
<keyword id="KW-0046">Antibiotic resistance</keyword>
<keyword id="KW-0997">Cell inner membrane</keyword>
<keyword id="KW-1003">Cell membrane</keyword>
<keyword id="KW-0378">Hydrolase</keyword>
<keyword id="KW-0441">Lipid A biosynthesis</keyword>
<keyword id="KW-0444">Lipid biosynthesis</keyword>
<keyword id="KW-0443">Lipid metabolism</keyword>
<keyword id="KW-0448">Lipopolysaccharide biosynthesis</keyword>
<keyword id="KW-0472">Membrane</keyword>
<keyword id="KW-1185">Reference proteome</keyword>
<keyword id="KW-0812">Transmembrane</keyword>
<keyword id="KW-1133">Transmembrane helix</keyword>
<proteinExistence type="evidence at protein level"/>
<reference key="1">
    <citation type="journal article" date="2004" name="J. Biol. Chem.">
        <title>Periplasmic cleavage and modification of the 1-phosphate group of Helicobacter pylori lipid A.</title>
        <authorList>
            <person name="Tran A.X."/>
            <person name="Karbarz M.J."/>
            <person name="Wang X."/>
            <person name="Raetz C.R."/>
            <person name="McGrath S.C."/>
            <person name="Cotter R.J."/>
            <person name="Trent M.S."/>
        </authorList>
    </citation>
    <scope>NUCLEOTIDE SEQUENCE [GENOMIC DNA]</scope>
    <scope>FUNCTION</scope>
    <scope>SUBSTRATE SPECIFICITY</scope>
    <scope>COFACTOR</scope>
    <scope>BIOPHYSICOCHEMICAL PROPERTIES</scope>
    <scope>SUBCELLULAR LOCATION</scope>
    <scope>STRUCTURE OF LIPID A</scope>
    <source>
        <strain>ATCC 700392 / 26695</strain>
    </source>
</reference>
<reference key="2">
    <citation type="journal article" date="1997" name="Nature">
        <title>The complete genome sequence of the gastric pathogen Helicobacter pylori.</title>
        <authorList>
            <person name="Tomb J.-F."/>
            <person name="White O."/>
            <person name="Kerlavage A.R."/>
            <person name="Clayton R.A."/>
            <person name="Sutton G.G."/>
            <person name="Fleischmann R.D."/>
            <person name="Ketchum K.A."/>
            <person name="Klenk H.-P."/>
            <person name="Gill S.R."/>
            <person name="Dougherty B.A."/>
            <person name="Nelson K.E."/>
            <person name="Quackenbush J."/>
            <person name="Zhou L."/>
            <person name="Kirkness E.F."/>
            <person name="Peterson S.N."/>
            <person name="Loftus B.J."/>
            <person name="Richardson D.L."/>
            <person name="Dodson R.J."/>
            <person name="Khalak H.G."/>
            <person name="Glodek A."/>
            <person name="McKenney K."/>
            <person name="FitzGerald L.M."/>
            <person name="Lee N."/>
            <person name="Adams M.D."/>
            <person name="Hickey E.K."/>
            <person name="Berg D.E."/>
            <person name="Gocayne J.D."/>
            <person name="Utterback T.R."/>
            <person name="Peterson J.D."/>
            <person name="Kelley J.M."/>
            <person name="Cotton M.D."/>
            <person name="Weidman J.F."/>
            <person name="Fujii C."/>
            <person name="Bowman C."/>
            <person name="Watthey L."/>
            <person name="Wallin E."/>
            <person name="Hayes W.S."/>
            <person name="Borodovsky M."/>
            <person name="Karp P.D."/>
            <person name="Smith H.O."/>
            <person name="Fraser C.M."/>
            <person name="Venter J.C."/>
        </authorList>
    </citation>
    <scope>NUCLEOTIDE SEQUENCE [LARGE SCALE GENOMIC DNA]</scope>
    <source>
        <strain>ATCC 700392 / 26695</strain>
    </source>
</reference>
<reference key="3">
    <citation type="submission" date="2012-10" db="EMBL/GenBank/DDBJ databases">
        <title>Draft genome of Helicobacter pylori.</title>
        <authorList>
            <person name="Manolov A."/>
            <person name="Prihodko E."/>
            <person name="Larin A."/>
            <person name="Karpova I."/>
            <person name="Semashko T."/>
            <person name="Alexeev D."/>
            <person name="Kostrjukova E."/>
            <person name="Govorun V."/>
        </authorList>
    </citation>
    <scope>NUCLEOTIDE SEQUENCE [LARGE SCALE GENOMIC DNA]</scope>
    <source>
        <strain>ATCC 700392 / 26695</strain>
    </source>
</reference>
<reference key="4">
    <citation type="journal article" date="2006" name="J. Bacteriol.">
        <title>The lipid A 1-phosphatase of Helicobacter pylori is required for resistance to the antimicrobial peptide polymyxin.</title>
        <authorList>
            <person name="Tran A.X."/>
            <person name="Whittimore J.D."/>
            <person name="Wyrick P.B."/>
            <person name="McGrath S.C."/>
            <person name="Cotter R.J."/>
            <person name="Trent M.S."/>
        </authorList>
    </citation>
    <scope>FUNCTION</scope>
    <scope>SUBSTRATE SPECIFICITY</scope>
    <scope>PATHWAY</scope>
    <scope>SUBCELLULAR LOCATION</scope>
    <scope>DISRUPTION PHENOTYPE</scope>
    <scope>STRUCTURE OF LIPID A</scope>
    <scope>ANTIBIOTIC RESISTANCE</scope>
    <source>
        <strain>ATCC 700392 / 26695</strain>
        <strain>Cp20-84</strain>
        <strain>Hp7-91</strain>
        <strain>Hsp110-93</strain>
    </source>
</reference>
<protein>
    <recommendedName>
        <fullName evidence="5">Lipid A 1-phosphatase</fullName>
        <ecNumber evidence="6">3.1.-.-</ecNumber>
    </recommendedName>
</protein>
<gene>
    <name evidence="5" type="primary">lpxE</name>
    <name type="ordered locus">HP_0021</name>
    <name type="ordered locus">C694_00100</name>
</gene>
<name>LPXE_HELPY</name>